<protein>
    <recommendedName>
        <fullName evidence="2">Putative uncharacterized membrane protein YAL031W-A</fullName>
    </recommendedName>
</protein>
<sequence length="102" mass="11414">MKDMNSIRYVFFFFSRDIKSCFYKVRSYLNLLLILEAILCPVDSLISIPNGIMVVSEPDSPFSHSNPSRRLFRKVNPSSCLSVLYLDLCCSGLIIAEAGIGG</sequence>
<name>YA031_YEAST</name>
<reference key="1">
    <citation type="journal article" date="1995" name="Proc. Natl. Acad. Sci. U.S.A.">
        <title>The nucleotide sequence of chromosome I from Saccharomyces cerevisiae.</title>
        <authorList>
            <person name="Bussey H."/>
            <person name="Kaback D.B."/>
            <person name="Zhong W.-W."/>
            <person name="Vo D.H."/>
            <person name="Clark M.W."/>
            <person name="Fortin N."/>
            <person name="Hall J."/>
            <person name="Ouellette B.F.F."/>
            <person name="Keng T."/>
            <person name="Barton A.B."/>
            <person name="Su Y."/>
            <person name="Davies C.J."/>
            <person name="Storms R.K."/>
        </authorList>
    </citation>
    <scope>NUCLEOTIDE SEQUENCE [LARGE SCALE GENOMIC DNA]</scope>
    <source>
        <strain>ATCC 204508 / S288c</strain>
    </source>
</reference>
<reference key="2">
    <citation type="journal article" date="2014" name="G3 (Bethesda)">
        <title>The reference genome sequence of Saccharomyces cerevisiae: Then and now.</title>
        <authorList>
            <person name="Engel S.R."/>
            <person name="Dietrich F.S."/>
            <person name="Fisk D.G."/>
            <person name="Binkley G."/>
            <person name="Balakrishnan R."/>
            <person name="Costanzo M.C."/>
            <person name="Dwight S.S."/>
            <person name="Hitz B.C."/>
            <person name="Karra K."/>
            <person name="Nash R.S."/>
            <person name="Weng S."/>
            <person name="Wong E.D."/>
            <person name="Lloyd P."/>
            <person name="Skrzypek M.S."/>
            <person name="Miyasato S.R."/>
            <person name="Simison M."/>
            <person name="Cherry J.M."/>
        </authorList>
    </citation>
    <scope>GENOME REANNOTATION</scope>
    <source>
        <strain>ATCC 204508 / S288c</strain>
    </source>
</reference>
<accession>A0A023PZ94</accession>
<feature type="chain" id="PRO_0000430972" description="Putative uncharacterized membrane protein YAL031W-A">
    <location>
        <begin position="1"/>
        <end position="102"/>
    </location>
</feature>
<feature type="transmembrane region" description="Helical; Name=1" evidence="1">
    <location>
        <begin position="28"/>
        <end position="48"/>
    </location>
</feature>
<feature type="transmembrane region" description="Helical; Name=2" evidence="1">
    <location>
        <begin position="81"/>
        <end position="101"/>
    </location>
</feature>
<comment type="subcellular location">
    <subcellularLocation>
        <location evidence="1">Membrane</location>
        <topology evidence="1">Multi-pass membrane protein</topology>
    </subcellularLocation>
</comment>
<comment type="miscellaneous">
    <text evidence="2">Partially overlaps GIP4.</text>
</comment>
<comment type="caution">
    <text evidence="3">Product of a dubious gene prediction unlikely to encode a functional protein. Because of that it is not part of the S.cerevisiae S288c complete/reference proteome set.</text>
</comment>
<proteinExistence type="uncertain"/>
<evidence type="ECO:0000255" key="1"/>
<evidence type="ECO:0000305" key="2"/>
<evidence type="ECO:0000305" key="3">
    <source>
    </source>
</evidence>
<evidence type="ECO:0000312" key="4">
    <source>
        <dbReference type="SGD" id="S000028731"/>
    </source>
</evidence>
<organism>
    <name type="scientific">Saccharomyces cerevisiae (strain ATCC 204508 / S288c)</name>
    <name type="common">Baker's yeast</name>
    <dbReference type="NCBI Taxonomy" id="559292"/>
    <lineage>
        <taxon>Eukaryota</taxon>
        <taxon>Fungi</taxon>
        <taxon>Dikarya</taxon>
        <taxon>Ascomycota</taxon>
        <taxon>Saccharomycotina</taxon>
        <taxon>Saccharomycetes</taxon>
        <taxon>Saccharomycetales</taxon>
        <taxon>Saccharomycetaceae</taxon>
        <taxon>Saccharomyces</taxon>
    </lineage>
</organism>
<dbReference type="EMBL" id="KJ412208">
    <property type="protein sequence ID" value="AHX39251.1"/>
    <property type="molecule type" value="Genomic_DNA"/>
</dbReference>
<dbReference type="PaxDb" id="4932-YAL031W-A"/>
<dbReference type="EnsemblFungi" id="YAL031W-A_mRNA">
    <property type="protein sequence ID" value="YAL031W-A"/>
    <property type="gene ID" value="YAL031W-A"/>
</dbReference>
<dbReference type="AGR" id="SGD:S000028731"/>
<dbReference type="SGD" id="S000028731">
    <property type="gene designation" value="YAL031W-A"/>
</dbReference>
<dbReference type="HOGENOM" id="CLU_2279644_0_0_1"/>
<dbReference type="GO" id="GO:0016020">
    <property type="term" value="C:membrane"/>
    <property type="evidence" value="ECO:0007669"/>
    <property type="project" value="UniProtKB-SubCell"/>
</dbReference>
<keyword id="KW-0472">Membrane</keyword>
<keyword id="KW-0812">Transmembrane</keyword>
<keyword id="KW-1133">Transmembrane helix</keyword>
<gene>
    <name evidence="4" type="ordered locus">YAL031W-A</name>
</gene>